<dbReference type="EC" id="2.1.1.37"/>
<dbReference type="EMBL" id="L77117">
    <property type="protein sequence ID" value="AAB98555.1"/>
    <property type="molecule type" value="Genomic_DNA"/>
</dbReference>
<dbReference type="PIR" id="C64370">
    <property type="entry name" value="C64370"/>
</dbReference>
<dbReference type="RefSeq" id="WP_010870067.1">
    <property type="nucleotide sequence ID" value="NC_000909.1"/>
</dbReference>
<dbReference type="SMR" id="Q57983"/>
<dbReference type="FunCoup" id="Q57983">
    <property type="interactions" value="20"/>
</dbReference>
<dbReference type="STRING" id="243232.MJ_0563"/>
<dbReference type="REBASE" id="3888">
    <property type="entry name" value="M.MjaORF563P"/>
</dbReference>
<dbReference type="PaxDb" id="243232-MJ_0563"/>
<dbReference type="EnsemblBacteria" id="AAB98555">
    <property type="protein sequence ID" value="AAB98555"/>
    <property type="gene ID" value="MJ_0563"/>
</dbReference>
<dbReference type="GeneID" id="1451428"/>
<dbReference type="KEGG" id="mja:MJ_0563"/>
<dbReference type="eggNOG" id="arCOG04157">
    <property type="taxonomic scope" value="Archaea"/>
</dbReference>
<dbReference type="HOGENOM" id="CLU_006958_2_2_2"/>
<dbReference type="InParanoid" id="Q57983"/>
<dbReference type="OrthoDB" id="5033at2157"/>
<dbReference type="PhylomeDB" id="Q57983"/>
<dbReference type="PRO" id="PR:Q57983"/>
<dbReference type="Proteomes" id="UP000000805">
    <property type="component" value="Chromosome"/>
</dbReference>
<dbReference type="GO" id="GO:0003886">
    <property type="term" value="F:DNA (cytosine-5-)-methyltransferase activity"/>
    <property type="evidence" value="ECO:0000318"/>
    <property type="project" value="GO_Central"/>
</dbReference>
<dbReference type="GO" id="GO:0003677">
    <property type="term" value="F:DNA binding"/>
    <property type="evidence" value="ECO:0000318"/>
    <property type="project" value="GO_Central"/>
</dbReference>
<dbReference type="GO" id="GO:0009307">
    <property type="term" value="P:DNA restriction-modification system"/>
    <property type="evidence" value="ECO:0007669"/>
    <property type="project" value="UniProtKB-KW"/>
</dbReference>
<dbReference type="GO" id="GO:0032259">
    <property type="term" value="P:methylation"/>
    <property type="evidence" value="ECO:0007669"/>
    <property type="project" value="UniProtKB-KW"/>
</dbReference>
<dbReference type="GO" id="GO:0044027">
    <property type="term" value="P:negative regulation of gene expression via chromosomal CpG island methylation"/>
    <property type="evidence" value="ECO:0000318"/>
    <property type="project" value="GO_Central"/>
</dbReference>
<dbReference type="Gene3D" id="3.90.120.10">
    <property type="entry name" value="DNA Methylase, subunit A, domain 2"/>
    <property type="match status" value="1"/>
</dbReference>
<dbReference type="Gene3D" id="3.40.50.150">
    <property type="entry name" value="Vaccinia Virus protein VP39"/>
    <property type="match status" value="1"/>
</dbReference>
<dbReference type="InterPro" id="IPR050390">
    <property type="entry name" value="C5-Methyltransferase"/>
</dbReference>
<dbReference type="InterPro" id="IPR001525">
    <property type="entry name" value="C5_MeTfrase"/>
</dbReference>
<dbReference type="InterPro" id="IPR029063">
    <property type="entry name" value="SAM-dependent_MTases_sf"/>
</dbReference>
<dbReference type="PANTHER" id="PTHR10629">
    <property type="entry name" value="CYTOSINE-SPECIFIC METHYLTRANSFERASE"/>
    <property type="match status" value="1"/>
</dbReference>
<dbReference type="PANTHER" id="PTHR10629:SF52">
    <property type="entry name" value="DNA (CYTOSINE-5)-METHYLTRANSFERASE 1"/>
    <property type="match status" value="1"/>
</dbReference>
<dbReference type="Pfam" id="PF00145">
    <property type="entry name" value="DNA_methylase"/>
    <property type="match status" value="1"/>
</dbReference>
<dbReference type="PRINTS" id="PR00105">
    <property type="entry name" value="C5METTRFRASE"/>
</dbReference>
<dbReference type="SUPFAM" id="SSF53335">
    <property type="entry name" value="S-adenosyl-L-methionine-dependent methyltransferases"/>
    <property type="match status" value="1"/>
</dbReference>
<dbReference type="PROSITE" id="PS51679">
    <property type="entry name" value="SAM_MT_C5"/>
    <property type="match status" value="1"/>
</dbReference>
<comment type="function">
    <text evidence="2">A putative methylase that may protect DNA from cleavage by an unknown endonuclease.</text>
</comment>
<comment type="catalytic activity">
    <reaction>
        <text>a 2'-deoxycytidine in DNA + S-adenosyl-L-methionine = a 5-methyl-2'-deoxycytidine in DNA + S-adenosyl-L-homocysteine + H(+)</text>
        <dbReference type="Rhea" id="RHEA:13681"/>
        <dbReference type="Rhea" id="RHEA-COMP:11369"/>
        <dbReference type="Rhea" id="RHEA-COMP:11370"/>
        <dbReference type="ChEBI" id="CHEBI:15378"/>
        <dbReference type="ChEBI" id="CHEBI:57856"/>
        <dbReference type="ChEBI" id="CHEBI:59789"/>
        <dbReference type="ChEBI" id="CHEBI:85452"/>
        <dbReference type="ChEBI" id="CHEBI:85454"/>
        <dbReference type="EC" id="2.1.1.37"/>
    </reaction>
</comment>
<comment type="similarity">
    <text evidence="1">Belongs to the class I-like SAM-binding methyltransferase superfamily. C5-methyltransferase family.</text>
</comment>
<evidence type="ECO:0000255" key="1">
    <source>
        <dbReference type="PROSITE-ProRule" id="PRU01016"/>
    </source>
</evidence>
<evidence type="ECO:0000303" key="2">
    <source>
    </source>
</evidence>
<sequence length="310" mass="36290">MNVIDLFSGCGGFSKGFLDENFRILGAIENFKPVVKTYLYNIKAPVWMDDIKRIPPKAFDEFIKNEKVDVIIGSPPCEPFTKANKLIKDNPLDRLYKDKVGRLVLYYIDYVNYFTQRNDDLIFVMENVPQIKEIKDELKKLFGDIGHKVYFNILRAEDYGNPSKRARMFISNIKLKPKKVDKLVVVEEALKDIPKDAKNHEIKKLSKEKVEMISKLKWGEALYRYRGKKKLMFNWYKLHPKKLAPTVKGRSRFIHPYEDRLLTVREQARLMSYPDDFVFFGGRDVQYNQIGESVPPILGRAIAKEIKKQL</sequence>
<reference key="1">
    <citation type="journal article" date="1996" name="Science">
        <title>Complete genome sequence of the methanogenic archaeon, Methanococcus jannaschii.</title>
        <authorList>
            <person name="Bult C.J."/>
            <person name="White O."/>
            <person name="Olsen G.J."/>
            <person name="Zhou L."/>
            <person name="Fleischmann R.D."/>
            <person name="Sutton G.G."/>
            <person name="Blake J.A."/>
            <person name="FitzGerald L.M."/>
            <person name="Clayton R.A."/>
            <person name="Gocayne J.D."/>
            <person name="Kerlavage A.R."/>
            <person name="Dougherty B.A."/>
            <person name="Tomb J.-F."/>
            <person name="Adams M.D."/>
            <person name="Reich C.I."/>
            <person name="Overbeek R."/>
            <person name="Kirkness E.F."/>
            <person name="Weinstock K.G."/>
            <person name="Merrick J.M."/>
            <person name="Glodek A."/>
            <person name="Scott J.L."/>
            <person name="Geoghagen N.S.M."/>
            <person name="Weidman J.F."/>
            <person name="Fuhrmann J.L."/>
            <person name="Nguyen D."/>
            <person name="Utterback T.R."/>
            <person name="Kelley J.M."/>
            <person name="Peterson J.D."/>
            <person name="Sadow P.W."/>
            <person name="Hanna M.C."/>
            <person name="Cotton M.D."/>
            <person name="Roberts K.M."/>
            <person name="Hurst M.A."/>
            <person name="Kaine B.P."/>
            <person name="Borodovsky M."/>
            <person name="Klenk H.-P."/>
            <person name="Fraser C.M."/>
            <person name="Smith H.O."/>
            <person name="Woese C.R."/>
            <person name="Venter J.C."/>
        </authorList>
    </citation>
    <scope>NUCLEOTIDE SEQUENCE [LARGE SCALE GENOMIC DNA]</scope>
    <source>
        <strain>ATCC 43067 / DSM 2661 / JAL-1 / JCM 10045 / NBRC 100440</strain>
    </source>
</reference>
<reference key="2">
    <citation type="journal article" date="2003" name="Nucleic Acids Res.">
        <title>A nomenclature for restriction enzymes, DNA methyltransferases, homing endonucleases and their genes.</title>
        <authorList>
            <person name="Roberts R.J."/>
            <person name="Belfort M."/>
            <person name="Bestor T."/>
            <person name="Bhagwat A.S."/>
            <person name="Bickle T.A."/>
            <person name="Bitinaite J."/>
            <person name="Blumenthal R.M."/>
            <person name="Degtyarev S.K."/>
            <person name="Dryden D.T."/>
            <person name="Dybvig K."/>
            <person name="Firman K."/>
            <person name="Gromova E.S."/>
            <person name="Gumport R.I."/>
            <person name="Halford S.E."/>
            <person name="Hattman S."/>
            <person name="Heitman J."/>
            <person name="Hornby D.P."/>
            <person name="Janulaitis A."/>
            <person name="Jeltsch A."/>
            <person name="Josephsen J."/>
            <person name="Kiss A."/>
            <person name="Klaenhammer T.R."/>
            <person name="Kobayashi I."/>
            <person name="Kong H."/>
            <person name="Krueger D.H."/>
            <person name="Lacks S."/>
            <person name="Marinus M.G."/>
            <person name="Miyahara M."/>
            <person name="Morgan R.D."/>
            <person name="Murray N.E."/>
            <person name="Nagaraja V."/>
            <person name="Piekarowicz A."/>
            <person name="Pingoud A."/>
            <person name="Raleigh E."/>
            <person name="Rao D.N."/>
            <person name="Reich N."/>
            <person name="Repin V.E."/>
            <person name="Selker E.U."/>
            <person name="Shaw P.C."/>
            <person name="Stein D.C."/>
            <person name="Stoddard B.L."/>
            <person name="Szybalski W."/>
            <person name="Trautner T.A."/>
            <person name="Van Etten J.L."/>
            <person name="Vitor J.M."/>
            <person name="Wilson G.G."/>
            <person name="Xu S.Y."/>
        </authorList>
    </citation>
    <scope>NOMENCLATURE</scope>
</reference>
<organism>
    <name type="scientific">Methanocaldococcus jannaschii (strain ATCC 43067 / DSM 2661 / JAL-1 / JCM 10045 / NBRC 100440)</name>
    <name type="common">Methanococcus jannaschii</name>
    <dbReference type="NCBI Taxonomy" id="243232"/>
    <lineage>
        <taxon>Archaea</taxon>
        <taxon>Methanobacteriati</taxon>
        <taxon>Methanobacteriota</taxon>
        <taxon>Methanomada group</taxon>
        <taxon>Methanococci</taxon>
        <taxon>Methanococcales</taxon>
        <taxon>Methanocaldococcaceae</taxon>
        <taxon>Methanocaldococcus</taxon>
    </lineage>
</organism>
<proteinExistence type="inferred from homology"/>
<name>MT51_METJA</name>
<protein>
    <recommendedName>
        <fullName evidence="2">Putative type II methyltransferase M.MJ0563P</fullName>
        <shortName evidence="2">M.MJ0563P</shortName>
        <ecNumber>2.1.1.37</ecNumber>
    </recommendedName>
    <alternativeName>
        <fullName>Cytosine-specific methyltransferase MJ0563</fullName>
    </alternativeName>
</protein>
<keyword id="KW-0238">DNA-binding</keyword>
<keyword id="KW-0489">Methyltransferase</keyword>
<keyword id="KW-1185">Reference proteome</keyword>
<keyword id="KW-0680">Restriction system</keyword>
<keyword id="KW-0949">S-adenosyl-L-methionine</keyword>
<keyword id="KW-0808">Transferase</keyword>
<feature type="chain" id="PRO_0000087916" description="Putative type II methyltransferase M.MJ0563P">
    <location>
        <begin position="1"/>
        <end position="310"/>
    </location>
</feature>
<feature type="domain" description="SAM-dependent MTase C5-type" evidence="1">
    <location>
        <begin position="1"/>
        <end position="310"/>
    </location>
</feature>
<feature type="active site" evidence="1">
    <location>
        <position position="77"/>
    </location>
</feature>
<gene>
    <name type="ordered locus">MJ0563</name>
</gene>
<accession>Q57983</accession>